<organism>
    <name type="scientific">Ectopseudomonas mendocina (strain ymp)</name>
    <name type="common">Pseudomonas mendocina</name>
    <dbReference type="NCBI Taxonomy" id="399739"/>
    <lineage>
        <taxon>Bacteria</taxon>
        <taxon>Pseudomonadati</taxon>
        <taxon>Pseudomonadota</taxon>
        <taxon>Gammaproteobacteria</taxon>
        <taxon>Pseudomonadales</taxon>
        <taxon>Pseudomonadaceae</taxon>
        <taxon>Ectopseudomonas</taxon>
    </lineage>
</organism>
<dbReference type="EC" id="2.1.1.199" evidence="1"/>
<dbReference type="EMBL" id="CP000680">
    <property type="protein sequence ID" value="ABP83682.1"/>
    <property type="molecule type" value="Genomic_DNA"/>
</dbReference>
<dbReference type="SMR" id="A4XQR6"/>
<dbReference type="STRING" id="399739.Pmen_0914"/>
<dbReference type="KEGG" id="pmy:Pmen_0914"/>
<dbReference type="PATRIC" id="fig|399739.8.peg.923"/>
<dbReference type="eggNOG" id="COG0275">
    <property type="taxonomic scope" value="Bacteria"/>
</dbReference>
<dbReference type="HOGENOM" id="CLU_038422_2_0_6"/>
<dbReference type="OrthoDB" id="9806637at2"/>
<dbReference type="GO" id="GO:0005737">
    <property type="term" value="C:cytoplasm"/>
    <property type="evidence" value="ECO:0007669"/>
    <property type="project" value="UniProtKB-SubCell"/>
</dbReference>
<dbReference type="GO" id="GO:0071424">
    <property type="term" value="F:rRNA (cytosine-N4-)-methyltransferase activity"/>
    <property type="evidence" value="ECO:0007669"/>
    <property type="project" value="UniProtKB-UniRule"/>
</dbReference>
<dbReference type="GO" id="GO:0070475">
    <property type="term" value="P:rRNA base methylation"/>
    <property type="evidence" value="ECO:0007669"/>
    <property type="project" value="UniProtKB-UniRule"/>
</dbReference>
<dbReference type="FunFam" id="1.10.150.170:FF:000001">
    <property type="entry name" value="Ribosomal RNA small subunit methyltransferase H"/>
    <property type="match status" value="1"/>
</dbReference>
<dbReference type="Gene3D" id="1.10.150.170">
    <property type="entry name" value="Putative methyltransferase TM0872, insert domain"/>
    <property type="match status" value="1"/>
</dbReference>
<dbReference type="Gene3D" id="3.40.50.150">
    <property type="entry name" value="Vaccinia Virus protein VP39"/>
    <property type="match status" value="1"/>
</dbReference>
<dbReference type="HAMAP" id="MF_01007">
    <property type="entry name" value="16SrRNA_methyltr_H"/>
    <property type="match status" value="1"/>
</dbReference>
<dbReference type="InterPro" id="IPR002903">
    <property type="entry name" value="RsmH"/>
</dbReference>
<dbReference type="InterPro" id="IPR023397">
    <property type="entry name" value="SAM-dep_MeTrfase_MraW_recog"/>
</dbReference>
<dbReference type="InterPro" id="IPR029063">
    <property type="entry name" value="SAM-dependent_MTases_sf"/>
</dbReference>
<dbReference type="NCBIfam" id="TIGR00006">
    <property type="entry name" value="16S rRNA (cytosine(1402)-N(4))-methyltransferase RsmH"/>
    <property type="match status" value="1"/>
</dbReference>
<dbReference type="PANTHER" id="PTHR11265:SF0">
    <property type="entry name" value="12S RRNA N4-METHYLCYTIDINE METHYLTRANSFERASE"/>
    <property type="match status" value="1"/>
</dbReference>
<dbReference type="PANTHER" id="PTHR11265">
    <property type="entry name" value="S-ADENOSYL-METHYLTRANSFERASE MRAW"/>
    <property type="match status" value="1"/>
</dbReference>
<dbReference type="Pfam" id="PF01795">
    <property type="entry name" value="Methyltransf_5"/>
    <property type="match status" value="1"/>
</dbReference>
<dbReference type="PIRSF" id="PIRSF004486">
    <property type="entry name" value="MraW"/>
    <property type="match status" value="1"/>
</dbReference>
<dbReference type="SUPFAM" id="SSF81799">
    <property type="entry name" value="Putative methyltransferase TM0872, insert domain"/>
    <property type="match status" value="1"/>
</dbReference>
<dbReference type="SUPFAM" id="SSF53335">
    <property type="entry name" value="S-adenosyl-L-methionine-dependent methyltransferases"/>
    <property type="match status" value="1"/>
</dbReference>
<name>RSMH_ECTM1</name>
<evidence type="ECO:0000255" key="1">
    <source>
        <dbReference type="HAMAP-Rule" id="MF_01007"/>
    </source>
</evidence>
<feature type="chain" id="PRO_0000387054" description="Ribosomal RNA small subunit methyltransferase H">
    <location>
        <begin position="1"/>
        <end position="314"/>
    </location>
</feature>
<feature type="binding site" evidence="1">
    <location>
        <begin position="36"/>
        <end position="38"/>
    </location>
    <ligand>
        <name>S-adenosyl-L-methionine</name>
        <dbReference type="ChEBI" id="CHEBI:59789"/>
    </ligand>
</feature>
<feature type="binding site" evidence="1">
    <location>
        <position position="56"/>
    </location>
    <ligand>
        <name>S-adenosyl-L-methionine</name>
        <dbReference type="ChEBI" id="CHEBI:59789"/>
    </ligand>
</feature>
<feature type="binding site" evidence="1">
    <location>
        <position position="82"/>
    </location>
    <ligand>
        <name>S-adenosyl-L-methionine</name>
        <dbReference type="ChEBI" id="CHEBI:59789"/>
    </ligand>
</feature>
<feature type="binding site" evidence="1">
    <location>
        <position position="104"/>
    </location>
    <ligand>
        <name>S-adenosyl-L-methionine</name>
        <dbReference type="ChEBI" id="CHEBI:59789"/>
    </ligand>
</feature>
<feature type="binding site" evidence="1">
    <location>
        <position position="111"/>
    </location>
    <ligand>
        <name>S-adenosyl-L-methionine</name>
        <dbReference type="ChEBI" id="CHEBI:59789"/>
    </ligand>
</feature>
<comment type="function">
    <text evidence="1">Specifically methylates the N4 position of cytidine in position 1402 (C1402) of 16S rRNA.</text>
</comment>
<comment type="catalytic activity">
    <reaction evidence="1">
        <text>cytidine(1402) in 16S rRNA + S-adenosyl-L-methionine = N(4)-methylcytidine(1402) in 16S rRNA + S-adenosyl-L-homocysteine + H(+)</text>
        <dbReference type="Rhea" id="RHEA:42928"/>
        <dbReference type="Rhea" id="RHEA-COMP:10286"/>
        <dbReference type="Rhea" id="RHEA-COMP:10287"/>
        <dbReference type="ChEBI" id="CHEBI:15378"/>
        <dbReference type="ChEBI" id="CHEBI:57856"/>
        <dbReference type="ChEBI" id="CHEBI:59789"/>
        <dbReference type="ChEBI" id="CHEBI:74506"/>
        <dbReference type="ChEBI" id="CHEBI:82748"/>
        <dbReference type="EC" id="2.1.1.199"/>
    </reaction>
</comment>
<comment type="subcellular location">
    <subcellularLocation>
        <location evidence="1">Cytoplasm</location>
    </subcellularLocation>
</comment>
<comment type="similarity">
    <text evidence="1">Belongs to the methyltransferase superfamily. RsmH family.</text>
</comment>
<sequence>MTDSTLRHITVLLDEAVEGLAVRADGCYIDGTFGRGGHSRLILHKLGPGGRLLGFDKDPLAIATGEALAAEDGRFVVVQRSFAELGDEAVVRGISGQVSGVLLDLGVSSPQLDDPERGFSFLNDGPLDMRMNPDVGVSAADWIATAEEDEIARVLKDYGEERFAKRMARAVVQRREQQPFTRTADLAKVLTEANPAWEKGKNPATRAFQGIRIYVNNELGDLERGLDAALEALEVGGRLVVISFHSLEDRIVKQFMKRQAKGEADKLPRDLPIIPKAFEPRLKLIGKPVYAGDAELKANPRSRSAVMRIAEKLR</sequence>
<protein>
    <recommendedName>
        <fullName evidence="1">Ribosomal RNA small subunit methyltransferase H</fullName>
        <ecNumber evidence="1">2.1.1.199</ecNumber>
    </recommendedName>
    <alternativeName>
        <fullName evidence="1">16S rRNA m(4)C1402 methyltransferase</fullName>
    </alternativeName>
    <alternativeName>
        <fullName evidence="1">rRNA (cytosine-N(4)-)-methyltransferase RsmH</fullName>
    </alternativeName>
</protein>
<gene>
    <name evidence="1" type="primary">rsmH</name>
    <name type="synonym">mraW</name>
    <name type="ordered locus">Pmen_0914</name>
</gene>
<keyword id="KW-0963">Cytoplasm</keyword>
<keyword id="KW-0489">Methyltransferase</keyword>
<keyword id="KW-0698">rRNA processing</keyword>
<keyword id="KW-0949">S-adenosyl-L-methionine</keyword>
<keyword id="KW-0808">Transferase</keyword>
<proteinExistence type="inferred from homology"/>
<accession>A4XQR6</accession>
<reference key="1">
    <citation type="submission" date="2007-04" db="EMBL/GenBank/DDBJ databases">
        <title>Complete sequence of Pseudomonas mendocina ymp.</title>
        <authorList>
            <consortium name="US DOE Joint Genome Institute"/>
            <person name="Copeland A."/>
            <person name="Lucas S."/>
            <person name="Lapidus A."/>
            <person name="Barry K."/>
            <person name="Glavina del Rio T."/>
            <person name="Dalin E."/>
            <person name="Tice H."/>
            <person name="Pitluck S."/>
            <person name="Kiss H."/>
            <person name="Brettin T."/>
            <person name="Detter J.C."/>
            <person name="Bruce D."/>
            <person name="Han C."/>
            <person name="Schmutz J."/>
            <person name="Larimer F."/>
            <person name="Land M."/>
            <person name="Hauser L."/>
            <person name="Kyrpides N."/>
            <person name="Mikhailova N."/>
            <person name="Hersman L."/>
            <person name="Dubois J."/>
            <person name="Maurice P."/>
            <person name="Richardson P."/>
        </authorList>
    </citation>
    <scope>NUCLEOTIDE SEQUENCE [LARGE SCALE GENOMIC DNA]</scope>
    <source>
        <strain>ymp</strain>
    </source>
</reference>